<comment type="catalytic activity">
    <reaction evidence="1">
        <text>tRNA(Gly) + glycine + ATP = glycyl-tRNA(Gly) + AMP + diphosphate</text>
        <dbReference type="Rhea" id="RHEA:16013"/>
        <dbReference type="Rhea" id="RHEA-COMP:9664"/>
        <dbReference type="Rhea" id="RHEA-COMP:9683"/>
        <dbReference type="ChEBI" id="CHEBI:30616"/>
        <dbReference type="ChEBI" id="CHEBI:33019"/>
        <dbReference type="ChEBI" id="CHEBI:57305"/>
        <dbReference type="ChEBI" id="CHEBI:78442"/>
        <dbReference type="ChEBI" id="CHEBI:78522"/>
        <dbReference type="ChEBI" id="CHEBI:456215"/>
        <dbReference type="EC" id="6.1.1.14"/>
    </reaction>
</comment>
<comment type="subunit">
    <text evidence="1">Tetramer of two alpha and two beta subunits.</text>
</comment>
<comment type="subcellular location">
    <subcellularLocation>
        <location evidence="1">Cytoplasm</location>
    </subcellularLocation>
</comment>
<comment type="similarity">
    <text evidence="1">Belongs to the class-II aminoacyl-tRNA synthetase family.</text>
</comment>
<keyword id="KW-0030">Aminoacyl-tRNA synthetase</keyword>
<keyword id="KW-0067">ATP-binding</keyword>
<keyword id="KW-0963">Cytoplasm</keyword>
<keyword id="KW-0436">Ligase</keyword>
<keyword id="KW-0547">Nucleotide-binding</keyword>
<keyword id="KW-0648">Protein biosynthesis</keyword>
<evidence type="ECO:0000255" key="1">
    <source>
        <dbReference type="HAMAP-Rule" id="MF_00255"/>
    </source>
</evidence>
<dbReference type="EC" id="6.1.1.14" evidence="1"/>
<dbReference type="EMBL" id="CP000243">
    <property type="protein sequence ID" value="ABE09527.1"/>
    <property type="molecule type" value="Genomic_DNA"/>
</dbReference>
<dbReference type="RefSeq" id="WP_001291788.1">
    <property type="nucleotide sequence ID" value="NZ_CP064825.1"/>
</dbReference>
<dbReference type="SMR" id="Q1R537"/>
<dbReference type="GeneID" id="75173758"/>
<dbReference type="KEGG" id="eci:UTI89_C4099"/>
<dbReference type="HOGENOM" id="CLU_007220_2_2_6"/>
<dbReference type="Proteomes" id="UP000001952">
    <property type="component" value="Chromosome"/>
</dbReference>
<dbReference type="GO" id="GO:0005829">
    <property type="term" value="C:cytosol"/>
    <property type="evidence" value="ECO:0007669"/>
    <property type="project" value="TreeGrafter"/>
</dbReference>
<dbReference type="GO" id="GO:0004814">
    <property type="term" value="F:arginine-tRNA ligase activity"/>
    <property type="evidence" value="ECO:0007669"/>
    <property type="project" value="InterPro"/>
</dbReference>
<dbReference type="GO" id="GO:0005524">
    <property type="term" value="F:ATP binding"/>
    <property type="evidence" value="ECO:0007669"/>
    <property type="project" value="UniProtKB-UniRule"/>
</dbReference>
<dbReference type="GO" id="GO:0004820">
    <property type="term" value="F:glycine-tRNA ligase activity"/>
    <property type="evidence" value="ECO:0007669"/>
    <property type="project" value="UniProtKB-UniRule"/>
</dbReference>
<dbReference type="GO" id="GO:0006420">
    <property type="term" value="P:arginyl-tRNA aminoacylation"/>
    <property type="evidence" value="ECO:0007669"/>
    <property type="project" value="InterPro"/>
</dbReference>
<dbReference type="GO" id="GO:0006426">
    <property type="term" value="P:glycyl-tRNA aminoacylation"/>
    <property type="evidence" value="ECO:0007669"/>
    <property type="project" value="UniProtKB-UniRule"/>
</dbReference>
<dbReference type="HAMAP" id="MF_00255">
    <property type="entry name" value="Gly_tRNA_synth_beta"/>
    <property type="match status" value="1"/>
</dbReference>
<dbReference type="InterPro" id="IPR008909">
    <property type="entry name" value="DALR_anticod-bd"/>
</dbReference>
<dbReference type="InterPro" id="IPR015944">
    <property type="entry name" value="Gly-tRNA-synth_bsu"/>
</dbReference>
<dbReference type="InterPro" id="IPR006194">
    <property type="entry name" value="Gly-tRNA-synth_heterodimer"/>
</dbReference>
<dbReference type="NCBIfam" id="TIGR00211">
    <property type="entry name" value="glyS"/>
    <property type="match status" value="1"/>
</dbReference>
<dbReference type="PANTHER" id="PTHR30075:SF2">
    <property type="entry name" value="GLYCINE--TRNA LIGASE, CHLOROPLASTIC_MITOCHONDRIAL 2"/>
    <property type="match status" value="1"/>
</dbReference>
<dbReference type="PANTHER" id="PTHR30075">
    <property type="entry name" value="GLYCYL-TRNA SYNTHETASE"/>
    <property type="match status" value="1"/>
</dbReference>
<dbReference type="Pfam" id="PF05746">
    <property type="entry name" value="DALR_1"/>
    <property type="match status" value="1"/>
</dbReference>
<dbReference type="Pfam" id="PF02092">
    <property type="entry name" value="tRNA_synt_2f"/>
    <property type="match status" value="1"/>
</dbReference>
<dbReference type="PRINTS" id="PR01045">
    <property type="entry name" value="TRNASYNTHGB"/>
</dbReference>
<dbReference type="SUPFAM" id="SSF109604">
    <property type="entry name" value="HD-domain/PDEase-like"/>
    <property type="match status" value="1"/>
</dbReference>
<dbReference type="PROSITE" id="PS50861">
    <property type="entry name" value="AA_TRNA_LIGASE_II_GLYAB"/>
    <property type="match status" value="1"/>
</dbReference>
<protein>
    <recommendedName>
        <fullName evidence="1">Glycine--tRNA ligase beta subunit</fullName>
        <ecNumber evidence="1">6.1.1.14</ecNumber>
    </recommendedName>
    <alternativeName>
        <fullName evidence="1">Glycyl-tRNA synthetase beta subunit</fullName>
        <shortName evidence="1">GlyRS</shortName>
    </alternativeName>
</protein>
<reference key="1">
    <citation type="journal article" date="2006" name="Proc. Natl. Acad. Sci. U.S.A.">
        <title>Identification of genes subject to positive selection in uropathogenic strains of Escherichia coli: a comparative genomics approach.</title>
        <authorList>
            <person name="Chen S.L."/>
            <person name="Hung C.-S."/>
            <person name="Xu J."/>
            <person name="Reigstad C.S."/>
            <person name="Magrini V."/>
            <person name="Sabo A."/>
            <person name="Blasiar D."/>
            <person name="Bieri T."/>
            <person name="Meyer R.R."/>
            <person name="Ozersky P."/>
            <person name="Armstrong J.R."/>
            <person name="Fulton R.S."/>
            <person name="Latreille J.P."/>
            <person name="Spieth J."/>
            <person name="Hooton T.M."/>
            <person name="Mardis E.R."/>
            <person name="Hultgren S.J."/>
            <person name="Gordon J.I."/>
        </authorList>
    </citation>
    <scope>NUCLEOTIDE SEQUENCE [LARGE SCALE GENOMIC DNA]</scope>
    <source>
        <strain>UTI89 / UPEC</strain>
    </source>
</reference>
<proteinExistence type="inferred from homology"/>
<name>SYGB_ECOUT</name>
<accession>Q1R537</accession>
<sequence length="689" mass="76813">MSEKTFLVEIGTEELPPKALRSLAESFAANFTAELDNAGLAHGTVQWFAAPRRLALKVANLAEAQPDREIEKRGPAIAQAFDAEGKPSKAAEGWARGCGITVDQAERLTTDKGEWLLYRAHVKGESTEALLPNMVATSLAKLPIPKLMRWGASDVHFVRPVHTVTLLLGDKVIPATILGIQSDRVIRGHRFMGEPEFTIDNADQYPEILRERGKVIADYEERKAKIKADAEEAARKIGGNADLSESLLEEVASLVEWPVVLTAKFEEKFLAVPSEALVYTMKGDQKYFPVYANDGKLLPNFIFVANIESKDPQQIISGNEKVVRPRLADAEFFFNTDRKKRLEDNLPRLQTVLFQQQLGTLRDKTDRIQALAGWIAEQIGADVNHATRAGLLSKCDLMTNMVFEFTDTQGVMGMHYARHDGEAEDVAVALNEQYQPRFAGDDLPSNPVACALAIADKMDTLAGIFGIGQHPKGDKDPFALRRAALGVLRIIVEKNLNLDLQTLTEEAVRLYGDKLTNANVVDDVIDFMLGRFRAWYQDEGYTVDTIQAVLARRPTRPADFDARMKAVSHFRTLEAAAALAAANKRVSNILAKSDEVLSDRVNASTLKEPEEIKLAMQVVVLRDKLEPYFAEGRYQDALVELAELREPVDAFFDKVMVMVDDKELRINRLTMLEKLRELFLRVADISLLQ</sequence>
<gene>
    <name evidence="1" type="primary">glyS</name>
    <name type="ordered locus">UTI89_C4099</name>
</gene>
<feature type="chain" id="PRO_1000006357" description="Glycine--tRNA ligase beta subunit">
    <location>
        <begin position="1"/>
        <end position="689"/>
    </location>
</feature>
<organism>
    <name type="scientific">Escherichia coli (strain UTI89 / UPEC)</name>
    <dbReference type="NCBI Taxonomy" id="364106"/>
    <lineage>
        <taxon>Bacteria</taxon>
        <taxon>Pseudomonadati</taxon>
        <taxon>Pseudomonadota</taxon>
        <taxon>Gammaproteobacteria</taxon>
        <taxon>Enterobacterales</taxon>
        <taxon>Enterobacteriaceae</taxon>
        <taxon>Escherichia</taxon>
    </lineage>
</organism>